<keyword id="KW-0479">Metal-binding</keyword>
<keyword id="KW-1185">Reference proteome</keyword>
<keyword id="KW-0346">Stress response</keyword>
<keyword id="KW-0862">Zinc</keyword>
<keyword id="KW-0863">Zinc-finger</keyword>
<gene>
    <name type="primary">SAP6</name>
    <name type="synonym">ZFP38</name>
    <name type="ordered locus">Os03g0792900</name>
    <name type="ordered locus">LOC_Os03g57890</name>
    <name type="ORF">OSJNBb0060J21.18</name>
</gene>
<organism>
    <name type="scientific">Oryza sativa subsp. japonica</name>
    <name type="common">Rice</name>
    <dbReference type="NCBI Taxonomy" id="39947"/>
    <lineage>
        <taxon>Eukaryota</taxon>
        <taxon>Viridiplantae</taxon>
        <taxon>Streptophyta</taxon>
        <taxon>Embryophyta</taxon>
        <taxon>Tracheophyta</taxon>
        <taxon>Spermatophyta</taxon>
        <taxon>Magnoliopsida</taxon>
        <taxon>Liliopsida</taxon>
        <taxon>Poales</taxon>
        <taxon>Poaceae</taxon>
        <taxon>BOP clade</taxon>
        <taxon>Oryzoideae</taxon>
        <taxon>Oryzeae</taxon>
        <taxon>Oryzinae</taxon>
        <taxon>Oryza</taxon>
        <taxon>Oryza sativa</taxon>
    </lineage>
</organism>
<comment type="function">
    <text evidence="1">May be involved in environmental stress response.</text>
</comment>
<comment type="induction">
    <text evidence="5">By dehydration and salt stress.</text>
</comment>
<proteinExistence type="evidence at transcript level"/>
<sequence length="160" mass="17532">MAQESWKKEAEETGVHTPEAPILCVNNCGFFGSRMTENMCSKCYRDTVKAKTVATVVEKKPLASLSSTPLVTEVTDGGSGSVADGKQVMEEDTPKPPSNRCLSCRKKVGLTGFKCRCGGTFCSMHRYADSHKCTFDYKQVGREQIAKQNPLVKADKITKI</sequence>
<feature type="chain" id="PRO_0000269869" description="Zinc finger A20 and AN1 domain-containing stress-associated protein 6">
    <location>
        <begin position="1"/>
        <end position="160"/>
    </location>
</feature>
<feature type="zinc finger region" description="A20-type" evidence="3">
    <location>
        <begin position="18"/>
        <end position="52"/>
    </location>
</feature>
<feature type="zinc finger region" description="AN1-type" evidence="2">
    <location>
        <begin position="95"/>
        <end position="141"/>
    </location>
</feature>
<feature type="region of interest" description="Disordered" evidence="4">
    <location>
        <begin position="73"/>
        <end position="94"/>
    </location>
</feature>
<feature type="binding site" evidence="3">
    <location>
        <position position="24"/>
    </location>
    <ligand>
        <name>Zn(2+)</name>
        <dbReference type="ChEBI" id="CHEBI:29105"/>
        <label>1</label>
    </ligand>
</feature>
<feature type="binding site" evidence="3">
    <location>
        <position position="28"/>
    </location>
    <ligand>
        <name>Zn(2+)</name>
        <dbReference type="ChEBI" id="CHEBI:29105"/>
        <label>1</label>
    </ligand>
</feature>
<feature type="binding site" evidence="3">
    <location>
        <position position="40"/>
    </location>
    <ligand>
        <name>Zn(2+)</name>
        <dbReference type="ChEBI" id="CHEBI:29105"/>
        <label>1</label>
    </ligand>
</feature>
<feature type="binding site" evidence="3">
    <location>
        <position position="43"/>
    </location>
    <ligand>
        <name>Zn(2+)</name>
        <dbReference type="ChEBI" id="CHEBI:29105"/>
        <label>1</label>
    </ligand>
</feature>
<feature type="binding site" evidence="2">
    <location>
        <position position="101"/>
    </location>
    <ligand>
        <name>Zn(2+)</name>
        <dbReference type="ChEBI" id="CHEBI:29105"/>
        <label>2</label>
    </ligand>
</feature>
<feature type="binding site" evidence="2">
    <location>
        <position position="104"/>
    </location>
    <ligand>
        <name>Zn(2+)</name>
        <dbReference type="ChEBI" id="CHEBI:29105"/>
        <label>2</label>
    </ligand>
</feature>
<feature type="binding site" evidence="2">
    <location>
        <position position="115"/>
    </location>
    <ligand>
        <name>Zn(2+)</name>
        <dbReference type="ChEBI" id="CHEBI:29105"/>
        <label>3</label>
    </ligand>
</feature>
<feature type="binding site" evidence="2">
    <location>
        <position position="117"/>
    </location>
    <ligand>
        <name>Zn(2+)</name>
        <dbReference type="ChEBI" id="CHEBI:29105"/>
        <label>3</label>
    </ligand>
</feature>
<feature type="binding site" evidence="2">
    <location>
        <position position="122"/>
    </location>
    <ligand>
        <name>Zn(2+)</name>
        <dbReference type="ChEBI" id="CHEBI:29105"/>
        <label>2</label>
    </ligand>
</feature>
<feature type="binding site" evidence="2">
    <location>
        <position position="125"/>
    </location>
    <ligand>
        <name>Zn(2+)</name>
        <dbReference type="ChEBI" id="CHEBI:29105"/>
        <label>2</label>
    </ligand>
</feature>
<feature type="binding site" evidence="2">
    <location>
        <position position="131"/>
    </location>
    <ligand>
        <name>Zn(2+)</name>
        <dbReference type="ChEBI" id="CHEBI:29105"/>
        <label>3</label>
    </ligand>
</feature>
<feature type="binding site" evidence="2">
    <location>
        <position position="133"/>
    </location>
    <ligand>
        <name>Zn(2+)</name>
        <dbReference type="ChEBI" id="CHEBI:29105"/>
        <label>3</label>
    </ligand>
</feature>
<evidence type="ECO:0000250" key="1"/>
<evidence type="ECO:0000255" key="2">
    <source>
        <dbReference type="PROSITE-ProRule" id="PRU00449"/>
    </source>
</evidence>
<evidence type="ECO:0000255" key="3">
    <source>
        <dbReference type="PROSITE-ProRule" id="PRU00451"/>
    </source>
</evidence>
<evidence type="ECO:0000256" key="4">
    <source>
        <dbReference type="SAM" id="MobiDB-lite"/>
    </source>
</evidence>
<evidence type="ECO:0000269" key="5">
    <source>
    </source>
</evidence>
<accession>Q852K5</accession>
<reference key="1">
    <citation type="submission" date="2003-09" db="EMBL/GenBank/DDBJ databases">
        <title>Molecular cloning of a zinc finger protein cDNA, OsZFP38, from rice.</title>
        <authorList>
            <person name="Huang J."/>
            <person name="Zhang H.-S."/>
        </authorList>
    </citation>
    <scope>NUCLEOTIDE SEQUENCE [MRNA]</scope>
    <source>
        <strain>cv. Jiu Caiqing</strain>
    </source>
</reference>
<reference key="2">
    <citation type="journal article" date="2005" name="Genome Res.">
        <title>Sequence, annotation, and analysis of synteny between rice chromosome 3 and diverged grass species.</title>
        <authorList>
            <consortium name="The rice chromosome 3 sequencing consortium"/>
            <person name="Buell C.R."/>
            <person name="Yuan Q."/>
            <person name="Ouyang S."/>
            <person name="Liu J."/>
            <person name="Zhu W."/>
            <person name="Wang A."/>
            <person name="Maiti R."/>
            <person name="Haas B."/>
            <person name="Wortman J."/>
            <person name="Pertea M."/>
            <person name="Jones K.M."/>
            <person name="Kim M."/>
            <person name="Overton L."/>
            <person name="Tsitrin T."/>
            <person name="Fadrosh D."/>
            <person name="Bera J."/>
            <person name="Weaver B."/>
            <person name="Jin S."/>
            <person name="Johri S."/>
            <person name="Reardon M."/>
            <person name="Webb K."/>
            <person name="Hill J."/>
            <person name="Moffat K."/>
            <person name="Tallon L."/>
            <person name="Van Aken S."/>
            <person name="Lewis M."/>
            <person name="Utterback T."/>
            <person name="Feldblyum T."/>
            <person name="Zismann V."/>
            <person name="Iobst S."/>
            <person name="Hsiao J."/>
            <person name="de Vazeille A.R."/>
            <person name="Salzberg S.L."/>
            <person name="White O."/>
            <person name="Fraser C.M."/>
            <person name="Yu Y."/>
            <person name="Kim H."/>
            <person name="Rambo T."/>
            <person name="Currie J."/>
            <person name="Collura K."/>
            <person name="Kernodle-Thompson S."/>
            <person name="Wei F."/>
            <person name="Kudrna K."/>
            <person name="Ammiraju J.S.S."/>
            <person name="Luo M."/>
            <person name="Goicoechea J.L."/>
            <person name="Wing R.A."/>
            <person name="Henry D."/>
            <person name="Oates R."/>
            <person name="Palmer M."/>
            <person name="Pries G."/>
            <person name="Saski C."/>
            <person name="Simmons J."/>
            <person name="Soderlund C."/>
            <person name="Nelson W."/>
            <person name="de la Bastide M."/>
            <person name="Spiegel L."/>
            <person name="Nascimento L."/>
            <person name="Huang E."/>
            <person name="Preston R."/>
            <person name="Zutavern T."/>
            <person name="Palmer L."/>
            <person name="O'Shaughnessy A."/>
            <person name="Dike S."/>
            <person name="McCombie W.R."/>
            <person name="Minx P."/>
            <person name="Cordum H."/>
            <person name="Wilson R."/>
            <person name="Jin W."/>
            <person name="Lee H.R."/>
            <person name="Jiang J."/>
            <person name="Jackson S."/>
        </authorList>
    </citation>
    <scope>NUCLEOTIDE SEQUENCE [LARGE SCALE GENOMIC DNA]</scope>
    <source>
        <strain>cv. Nipponbare</strain>
    </source>
</reference>
<reference key="3">
    <citation type="journal article" date="2005" name="Nature">
        <title>The map-based sequence of the rice genome.</title>
        <authorList>
            <consortium name="International rice genome sequencing project (IRGSP)"/>
        </authorList>
    </citation>
    <scope>NUCLEOTIDE SEQUENCE [LARGE SCALE GENOMIC DNA]</scope>
    <source>
        <strain>cv. Nipponbare</strain>
    </source>
</reference>
<reference key="4">
    <citation type="journal article" date="2008" name="Nucleic Acids Res.">
        <title>The rice annotation project database (RAP-DB): 2008 update.</title>
        <authorList>
            <consortium name="The rice annotation project (RAP)"/>
        </authorList>
    </citation>
    <scope>GENOME REANNOTATION</scope>
    <source>
        <strain>cv. Nipponbare</strain>
    </source>
</reference>
<reference key="5">
    <citation type="journal article" date="2013" name="Rice">
        <title>Improvement of the Oryza sativa Nipponbare reference genome using next generation sequence and optical map data.</title>
        <authorList>
            <person name="Kawahara Y."/>
            <person name="de la Bastide M."/>
            <person name="Hamilton J.P."/>
            <person name="Kanamori H."/>
            <person name="McCombie W.R."/>
            <person name="Ouyang S."/>
            <person name="Schwartz D.C."/>
            <person name="Tanaka T."/>
            <person name="Wu J."/>
            <person name="Zhou S."/>
            <person name="Childs K.L."/>
            <person name="Davidson R.M."/>
            <person name="Lin H."/>
            <person name="Quesada-Ocampo L."/>
            <person name="Vaillancourt B."/>
            <person name="Sakai H."/>
            <person name="Lee S.S."/>
            <person name="Kim J."/>
            <person name="Numa H."/>
            <person name="Itoh T."/>
            <person name="Buell C.R."/>
            <person name="Matsumoto T."/>
        </authorList>
    </citation>
    <scope>GENOME REANNOTATION</scope>
    <source>
        <strain>cv. Nipponbare</strain>
    </source>
</reference>
<reference key="6">
    <citation type="journal article" date="2006" name="Mol. Genet. Genomics">
        <title>Genome-wide analysis of the stress associated protein (SAP) gene family containing A20/AN1 zinc-finger(s) in rice and their phylogenetic relationship with Arabidopsis.</title>
        <authorList>
            <person name="Vij S."/>
            <person name="Tyagi A.K."/>
        </authorList>
    </citation>
    <scope>GENE FAMILY</scope>
    <scope>INDUCTION</scope>
</reference>
<dbReference type="EMBL" id="AY377427">
    <property type="protein sequence ID" value="AAQ83587.1"/>
    <property type="molecule type" value="mRNA"/>
</dbReference>
<dbReference type="EMBL" id="AC090871">
    <property type="protein sequence ID" value="AAO37974.1"/>
    <property type="molecule type" value="Genomic_DNA"/>
</dbReference>
<dbReference type="EMBL" id="DP000009">
    <property type="protein sequence ID" value="ABF99304.1"/>
    <property type="molecule type" value="Genomic_DNA"/>
</dbReference>
<dbReference type="EMBL" id="AP008209">
    <property type="protein sequence ID" value="BAF13441.1"/>
    <property type="molecule type" value="Genomic_DNA"/>
</dbReference>
<dbReference type="EMBL" id="AP014959">
    <property type="protein sequence ID" value="BAS86801.1"/>
    <property type="molecule type" value="Genomic_DNA"/>
</dbReference>
<dbReference type="RefSeq" id="XP_015632900.1">
    <property type="nucleotide sequence ID" value="XM_015777414.1"/>
</dbReference>
<dbReference type="RefSeq" id="XP_015632901.1">
    <property type="nucleotide sequence ID" value="XM_015777415.1"/>
</dbReference>
<dbReference type="SMR" id="Q852K5"/>
<dbReference type="FunCoup" id="Q852K5">
    <property type="interactions" value="682"/>
</dbReference>
<dbReference type="STRING" id="39947.Q852K5"/>
<dbReference type="PaxDb" id="39947-Q852K5"/>
<dbReference type="EnsemblPlants" id="Os03t0792900-01">
    <property type="protein sequence ID" value="Os03t0792900-01"/>
    <property type="gene ID" value="Os03g0792900"/>
</dbReference>
<dbReference type="Gramene" id="Os03t0792900-01">
    <property type="protein sequence ID" value="Os03t0792900-01"/>
    <property type="gene ID" value="Os03g0792900"/>
</dbReference>
<dbReference type="KEGG" id="dosa:Os03g0792900"/>
<dbReference type="eggNOG" id="KOG3173">
    <property type="taxonomic scope" value="Eukaryota"/>
</dbReference>
<dbReference type="HOGENOM" id="CLU_057016_5_0_1"/>
<dbReference type="InParanoid" id="Q852K5"/>
<dbReference type="OMA" id="RYADSHK"/>
<dbReference type="OrthoDB" id="428577at2759"/>
<dbReference type="Proteomes" id="UP000000763">
    <property type="component" value="Chromosome 3"/>
</dbReference>
<dbReference type="Proteomes" id="UP000059680">
    <property type="component" value="Chromosome 3"/>
</dbReference>
<dbReference type="ExpressionAtlas" id="Q852K5">
    <property type="expression patterns" value="baseline and differential"/>
</dbReference>
<dbReference type="GO" id="GO:0003677">
    <property type="term" value="F:DNA binding"/>
    <property type="evidence" value="ECO:0007669"/>
    <property type="project" value="InterPro"/>
</dbReference>
<dbReference type="GO" id="GO:0008270">
    <property type="term" value="F:zinc ion binding"/>
    <property type="evidence" value="ECO:0007669"/>
    <property type="project" value="UniProtKB-KW"/>
</dbReference>
<dbReference type="FunFam" id="4.10.1110.10:FF:000001">
    <property type="entry name" value="Zinc finger AN1-type containing 6"/>
    <property type="match status" value="1"/>
</dbReference>
<dbReference type="Gene3D" id="1.20.5.4770">
    <property type="match status" value="1"/>
</dbReference>
<dbReference type="Gene3D" id="4.10.1110.10">
    <property type="entry name" value="AN1-like Zinc finger"/>
    <property type="match status" value="1"/>
</dbReference>
<dbReference type="InterPro" id="IPR035896">
    <property type="entry name" value="AN1-like_Znf"/>
</dbReference>
<dbReference type="InterPro" id="IPR050652">
    <property type="entry name" value="AN1_A20_ZnFinger"/>
</dbReference>
<dbReference type="InterPro" id="IPR002653">
    <property type="entry name" value="Znf_A20"/>
</dbReference>
<dbReference type="InterPro" id="IPR000058">
    <property type="entry name" value="Znf_AN1"/>
</dbReference>
<dbReference type="PANTHER" id="PTHR10634">
    <property type="entry name" value="AN1-TYPE ZINC FINGER PROTEIN"/>
    <property type="match status" value="1"/>
</dbReference>
<dbReference type="PANTHER" id="PTHR10634:SF71">
    <property type="entry name" value="ZINC FINGER A20 AND AN1 DOMAIN-CONTAINING STRESS-ASSOCIATED PROTEIN 6"/>
    <property type="match status" value="1"/>
</dbReference>
<dbReference type="Pfam" id="PF01754">
    <property type="entry name" value="zf-A20"/>
    <property type="match status" value="1"/>
</dbReference>
<dbReference type="Pfam" id="PF01428">
    <property type="entry name" value="zf-AN1"/>
    <property type="match status" value="1"/>
</dbReference>
<dbReference type="SMART" id="SM00259">
    <property type="entry name" value="ZnF_A20"/>
    <property type="match status" value="1"/>
</dbReference>
<dbReference type="SMART" id="SM00154">
    <property type="entry name" value="ZnF_AN1"/>
    <property type="match status" value="1"/>
</dbReference>
<dbReference type="SUPFAM" id="SSF118310">
    <property type="entry name" value="AN1-like Zinc finger"/>
    <property type="match status" value="1"/>
</dbReference>
<dbReference type="SUPFAM" id="SSF57716">
    <property type="entry name" value="Glucocorticoid receptor-like (DNA-binding domain)"/>
    <property type="match status" value="1"/>
</dbReference>
<dbReference type="PROSITE" id="PS51036">
    <property type="entry name" value="ZF_A20"/>
    <property type="match status" value="1"/>
</dbReference>
<dbReference type="PROSITE" id="PS51039">
    <property type="entry name" value="ZF_AN1"/>
    <property type="match status" value="1"/>
</dbReference>
<protein>
    <recommendedName>
        <fullName>Zinc finger A20 and AN1 domain-containing stress-associated protein 6</fullName>
        <shortName>OsSAP6</shortName>
    </recommendedName>
</protein>
<name>SAP6_ORYSJ</name>